<comment type="catalytic activity">
    <reaction evidence="1">
        <text>(S)-4-amino-5-oxopentanoate = 5-aminolevulinate</text>
        <dbReference type="Rhea" id="RHEA:14265"/>
        <dbReference type="ChEBI" id="CHEBI:57501"/>
        <dbReference type="ChEBI" id="CHEBI:356416"/>
        <dbReference type="EC" id="5.4.3.8"/>
    </reaction>
</comment>
<comment type="cofactor">
    <cofactor evidence="1">
        <name>pyridoxal 5'-phosphate</name>
        <dbReference type="ChEBI" id="CHEBI:597326"/>
    </cofactor>
</comment>
<comment type="pathway">
    <text evidence="1">Porphyrin-containing compound metabolism; protoporphyrin-IX biosynthesis; 5-aminolevulinate from L-glutamyl-tRNA(Glu): step 2/2.</text>
</comment>
<comment type="subunit">
    <text evidence="1">Homodimer.</text>
</comment>
<comment type="subcellular location">
    <subcellularLocation>
        <location evidence="1">Cytoplasm</location>
    </subcellularLocation>
</comment>
<comment type="similarity">
    <text evidence="1">Belongs to the class-III pyridoxal-phosphate-dependent aminotransferase family. HemL subfamily.</text>
</comment>
<accession>C4L367</accession>
<gene>
    <name evidence="1" type="primary">hemL1</name>
    <name type="ordered locus">EAT1b_2420</name>
</gene>
<evidence type="ECO:0000255" key="1">
    <source>
        <dbReference type="HAMAP-Rule" id="MF_00375"/>
    </source>
</evidence>
<protein>
    <recommendedName>
        <fullName evidence="1">Glutamate-1-semialdehyde 2,1-aminomutase 1</fullName>
        <shortName evidence="1">GSA 1</shortName>
        <ecNumber evidence="1">5.4.3.8</ecNumber>
    </recommendedName>
    <alternativeName>
        <fullName evidence="1">Glutamate-1-semialdehyde aminotransferase 1</fullName>
        <shortName evidence="1">GSA-AT 1</shortName>
    </alternativeName>
</protein>
<organism>
    <name type="scientific">Exiguobacterium sp. (strain ATCC BAA-1283 / AT1b)</name>
    <dbReference type="NCBI Taxonomy" id="360911"/>
    <lineage>
        <taxon>Bacteria</taxon>
        <taxon>Bacillati</taxon>
        <taxon>Bacillota</taxon>
        <taxon>Bacilli</taxon>
        <taxon>Bacillales</taxon>
        <taxon>Bacillales Family XII. Incertae Sedis</taxon>
        <taxon>Exiguobacterium</taxon>
    </lineage>
</organism>
<dbReference type="EC" id="5.4.3.8" evidence="1"/>
<dbReference type="EMBL" id="CP001615">
    <property type="protein sequence ID" value="ACQ71341.1"/>
    <property type="molecule type" value="Genomic_DNA"/>
</dbReference>
<dbReference type="RefSeq" id="WP_015880900.1">
    <property type="nucleotide sequence ID" value="NC_012673.1"/>
</dbReference>
<dbReference type="SMR" id="C4L367"/>
<dbReference type="STRING" id="360911.EAT1b_2420"/>
<dbReference type="KEGG" id="eat:EAT1b_2420"/>
<dbReference type="eggNOG" id="COG0001">
    <property type="taxonomic scope" value="Bacteria"/>
</dbReference>
<dbReference type="HOGENOM" id="CLU_016922_1_5_9"/>
<dbReference type="OrthoDB" id="9807885at2"/>
<dbReference type="UniPathway" id="UPA00251">
    <property type="reaction ID" value="UER00317"/>
</dbReference>
<dbReference type="Proteomes" id="UP000000716">
    <property type="component" value="Chromosome"/>
</dbReference>
<dbReference type="GO" id="GO:0005737">
    <property type="term" value="C:cytoplasm"/>
    <property type="evidence" value="ECO:0007669"/>
    <property type="project" value="UniProtKB-SubCell"/>
</dbReference>
<dbReference type="GO" id="GO:0042286">
    <property type="term" value="F:glutamate-1-semialdehyde 2,1-aminomutase activity"/>
    <property type="evidence" value="ECO:0007669"/>
    <property type="project" value="UniProtKB-UniRule"/>
</dbReference>
<dbReference type="GO" id="GO:0030170">
    <property type="term" value="F:pyridoxal phosphate binding"/>
    <property type="evidence" value="ECO:0007669"/>
    <property type="project" value="InterPro"/>
</dbReference>
<dbReference type="GO" id="GO:0008483">
    <property type="term" value="F:transaminase activity"/>
    <property type="evidence" value="ECO:0007669"/>
    <property type="project" value="InterPro"/>
</dbReference>
<dbReference type="GO" id="GO:0006782">
    <property type="term" value="P:protoporphyrinogen IX biosynthetic process"/>
    <property type="evidence" value="ECO:0007669"/>
    <property type="project" value="UniProtKB-UniRule"/>
</dbReference>
<dbReference type="CDD" id="cd00610">
    <property type="entry name" value="OAT_like"/>
    <property type="match status" value="1"/>
</dbReference>
<dbReference type="FunFam" id="3.40.640.10:FF:000021">
    <property type="entry name" value="Glutamate-1-semialdehyde 2,1-aminomutase"/>
    <property type="match status" value="1"/>
</dbReference>
<dbReference type="Gene3D" id="3.90.1150.10">
    <property type="entry name" value="Aspartate Aminotransferase, domain 1"/>
    <property type="match status" value="1"/>
</dbReference>
<dbReference type="Gene3D" id="3.40.640.10">
    <property type="entry name" value="Type I PLP-dependent aspartate aminotransferase-like (Major domain)"/>
    <property type="match status" value="1"/>
</dbReference>
<dbReference type="HAMAP" id="MF_00375">
    <property type="entry name" value="HemL_aminotrans_3"/>
    <property type="match status" value="1"/>
</dbReference>
<dbReference type="InterPro" id="IPR004639">
    <property type="entry name" value="4pyrrol_synth_GluAld_NH2Trfase"/>
</dbReference>
<dbReference type="InterPro" id="IPR005814">
    <property type="entry name" value="Aminotrans_3"/>
</dbReference>
<dbReference type="InterPro" id="IPR015424">
    <property type="entry name" value="PyrdxlP-dep_Trfase"/>
</dbReference>
<dbReference type="InterPro" id="IPR015421">
    <property type="entry name" value="PyrdxlP-dep_Trfase_major"/>
</dbReference>
<dbReference type="InterPro" id="IPR015422">
    <property type="entry name" value="PyrdxlP-dep_Trfase_small"/>
</dbReference>
<dbReference type="NCBIfam" id="TIGR00713">
    <property type="entry name" value="hemL"/>
    <property type="match status" value="1"/>
</dbReference>
<dbReference type="NCBIfam" id="NF000818">
    <property type="entry name" value="PRK00062.1"/>
    <property type="match status" value="1"/>
</dbReference>
<dbReference type="NCBIfam" id="NF009055">
    <property type="entry name" value="PRK12389.1"/>
    <property type="match status" value="1"/>
</dbReference>
<dbReference type="PANTHER" id="PTHR43713">
    <property type="entry name" value="GLUTAMATE-1-SEMIALDEHYDE 2,1-AMINOMUTASE"/>
    <property type="match status" value="1"/>
</dbReference>
<dbReference type="PANTHER" id="PTHR43713:SF1">
    <property type="entry name" value="GLUTAMATE-1-SEMIALDEHYDE 2,1-AMINOMUTASE 2"/>
    <property type="match status" value="1"/>
</dbReference>
<dbReference type="Pfam" id="PF00202">
    <property type="entry name" value="Aminotran_3"/>
    <property type="match status" value="1"/>
</dbReference>
<dbReference type="SUPFAM" id="SSF53383">
    <property type="entry name" value="PLP-dependent transferases"/>
    <property type="match status" value="1"/>
</dbReference>
<proteinExistence type="inferred from homology"/>
<keyword id="KW-0963">Cytoplasm</keyword>
<keyword id="KW-0413">Isomerase</keyword>
<keyword id="KW-0627">Porphyrin biosynthesis</keyword>
<keyword id="KW-0663">Pyridoxal phosphate</keyword>
<reference key="1">
    <citation type="journal article" date="2011" name="J. Bacteriol.">
        <title>Complete genome sequence of the Thermophilic Bacterium Exiguobacterium sp. AT1b.</title>
        <authorList>
            <person name="Vishnivetskaya T.A."/>
            <person name="Lucas S."/>
            <person name="Copeland A."/>
            <person name="Lapidus A."/>
            <person name="Glavina del Rio T."/>
            <person name="Dalin E."/>
            <person name="Tice H."/>
            <person name="Bruce D.C."/>
            <person name="Goodwin L.A."/>
            <person name="Pitluck S."/>
            <person name="Saunders E."/>
            <person name="Brettin T."/>
            <person name="Detter C."/>
            <person name="Han C."/>
            <person name="Larimer F."/>
            <person name="Land M.L."/>
            <person name="Hauser L.J."/>
            <person name="Kyrpides N.C."/>
            <person name="Ovchinnikova G."/>
            <person name="Kathariou S."/>
            <person name="Ramaley R.F."/>
            <person name="Rodrigues D.F."/>
            <person name="Hendrix C."/>
            <person name="Richardson P."/>
            <person name="Tiedje J.M."/>
        </authorList>
    </citation>
    <scope>NUCLEOTIDE SEQUENCE [LARGE SCALE GENOMIC DNA]</scope>
    <source>
        <strain>ATCC BAA-1283 / AT1b</strain>
    </source>
</reference>
<name>GSA1_EXISA</name>
<feature type="chain" id="PRO_0000382315" description="Glutamate-1-semialdehyde 2,1-aminomutase 1">
    <location>
        <begin position="1"/>
        <end position="432"/>
    </location>
</feature>
<feature type="modified residue" description="N6-(pyridoxal phosphate)lysine" evidence="1">
    <location>
        <position position="272"/>
    </location>
</feature>
<sequence>MTTSSNRQSSDALYQDALTHIVGGVNSPSRSFKAVGGGAPVYMERGEGAYFYDVDGNRYIDYLAAYGPIITGHAHPHIHEALMNASSKGLLYGTPHRLEVEFAKKLKQAIPSMDKVRFTNSGTEAVMTTVRVARAYTGRELVVKFSGCYHGHSDLMLIAAGSGPATLGSPDSAGVTKATAKEVITVPFNDVEAYREMMKEWGDQVACVLVEPIVGNFGIVEPKPGFLQAVNDITHEHGALVIYDEVITAFRFTYGSAQQVYGIEPDMTALGKIIGGGLPIGAYGGKAEIMETVAPLGPAYQAGTMAGNPASMATGIACLEVLEQPGVYEKLDALGAKLEAGIREAAEKHDVTITLNRLKGALTVYFTDEIVTDYEGAEKSDGEKFGRFFKLMLENGVNLAPSKYEAWFLTTEHTEQDIEETIEAVNRSFAQL</sequence>